<keyword id="KW-0456">Lyase</keyword>
<evidence type="ECO:0000255" key="1">
    <source>
        <dbReference type="HAMAP-Rule" id="MF_00694"/>
    </source>
</evidence>
<accession>A3PQ70</accession>
<feature type="chain" id="PRO_1000062044" description="Probable 5-dehydro-4-deoxyglucarate dehydratase">
    <location>
        <begin position="1"/>
        <end position="301"/>
    </location>
</feature>
<reference key="1">
    <citation type="submission" date="2007-02" db="EMBL/GenBank/DDBJ databases">
        <title>Complete sequence of chromosome 2 of Rhodobacter sphaeroides ATCC 17029.</title>
        <authorList>
            <person name="Copeland A."/>
            <person name="Lucas S."/>
            <person name="Lapidus A."/>
            <person name="Barry K."/>
            <person name="Detter J.C."/>
            <person name="Glavina del Rio T."/>
            <person name="Hammon N."/>
            <person name="Israni S."/>
            <person name="Dalin E."/>
            <person name="Tice H."/>
            <person name="Pitluck S."/>
            <person name="Kiss H."/>
            <person name="Brettin T."/>
            <person name="Bruce D."/>
            <person name="Han C."/>
            <person name="Tapia R."/>
            <person name="Gilna P."/>
            <person name="Schmutz J."/>
            <person name="Larimer F."/>
            <person name="Land M."/>
            <person name="Hauser L."/>
            <person name="Kyrpides N."/>
            <person name="Mikhailova N."/>
            <person name="Richardson P."/>
            <person name="Mackenzie C."/>
            <person name="Choudhary M."/>
            <person name="Donohue T.J."/>
            <person name="Kaplan S."/>
        </authorList>
    </citation>
    <scope>NUCLEOTIDE SEQUENCE [LARGE SCALE GENOMIC DNA]</scope>
    <source>
        <strain>ATCC 17029 / ATH 2.4.9</strain>
    </source>
</reference>
<name>KDGD_CERS1</name>
<proteinExistence type="inferred from homology"/>
<gene>
    <name type="ordered locus">Rsph17029_3393</name>
</gene>
<comment type="catalytic activity">
    <reaction evidence="1">
        <text>5-dehydro-4-deoxy-D-glucarate + H(+) = 2,5-dioxopentanoate + CO2 + H2O</text>
        <dbReference type="Rhea" id="RHEA:24608"/>
        <dbReference type="ChEBI" id="CHEBI:15377"/>
        <dbReference type="ChEBI" id="CHEBI:15378"/>
        <dbReference type="ChEBI" id="CHEBI:16526"/>
        <dbReference type="ChEBI" id="CHEBI:42819"/>
        <dbReference type="ChEBI" id="CHEBI:58136"/>
        <dbReference type="EC" id="4.2.1.41"/>
    </reaction>
</comment>
<comment type="pathway">
    <text evidence="1">Carbohydrate acid metabolism; D-glucarate degradation; 2,5-dioxopentanoate from D-glucarate: step 2/2.</text>
</comment>
<comment type="similarity">
    <text evidence="1">Belongs to the DapA family.</text>
</comment>
<sequence>MDPQQIKAALGSGLLSFPVTPFDAENRFAAAPYQKHVEWLSGFDAPVLFAAGGTGEFFSLTPDEIPAIVRAAKESAGKTAIVSGCGYGTEIARGIARSVEAAGGDGILLLPHYLIDAPQEGLYAHVKAVCQATGMGVMVYNRDNAVLQADTLARLCDDCPNLVGFKDGTGDIGLVRQITAKMGDRLTYLGGMPTAELFAEAYLGASFTTYSSAVFNFVPALANKFYAALRAGDRATCESILNSFFYPFMELRSRRKGYAVAAVKAGVRLVGFDAGPVRAPLSDLTGEEEEILKALIDAHRE</sequence>
<organism>
    <name type="scientific">Cereibacter sphaeroides (strain ATCC 17029 / ATH 2.4.9)</name>
    <name type="common">Rhodobacter sphaeroides</name>
    <dbReference type="NCBI Taxonomy" id="349101"/>
    <lineage>
        <taxon>Bacteria</taxon>
        <taxon>Pseudomonadati</taxon>
        <taxon>Pseudomonadota</taxon>
        <taxon>Alphaproteobacteria</taxon>
        <taxon>Rhodobacterales</taxon>
        <taxon>Paracoccaceae</taxon>
        <taxon>Cereibacter</taxon>
    </lineage>
</organism>
<protein>
    <recommendedName>
        <fullName evidence="1">Probable 5-dehydro-4-deoxyglucarate dehydratase</fullName>
        <ecNumber evidence="1">4.2.1.41</ecNumber>
    </recommendedName>
    <alternativeName>
        <fullName evidence="1">5-keto-4-deoxy-glucarate dehydratase</fullName>
        <shortName evidence="1">KDGDH</shortName>
    </alternativeName>
</protein>
<dbReference type="EC" id="4.2.1.41" evidence="1"/>
<dbReference type="EMBL" id="CP000578">
    <property type="protein sequence ID" value="ABN78486.1"/>
    <property type="molecule type" value="Genomic_DNA"/>
</dbReference>
<dbReference type="RefSeq" id="WP_011842331.1">
    <property type="nucleotide sequence ID" value="NC_009050.1"/>
</dbReference>
<dbReference type="SMR" id="A3PQ70"/>
<dbReference type="KEGG" id="rsh:Rsph17029_3393"/>
<dbReference type="HOGENOM" id="CLU_049343_5_2_5"/>
<dbReference type="UniPathway" id="UPA00564">
    <property type="reaction ID" value="UER00628"/>
</dbReference>
<dbReference type="GO" id="GO:0008840">
    <property type="term" value="F:4-hydroxy-tetrahydrodipicolinate synthase activity"/>
    <property type="evidence" value="ECO:0007669"/>
    <property type="project" value="TreeGrafter"/>
</dbReference>
<dbReference type="GO" id="GO:0047448">
    <property type="term" value="F:5-dehydro-4-deoxyglucarate dehydratase activity"/>
    <property type="evidence" value="ECO:0007669"/>
    <property type="project" value="UniProtKB-UniRule"/>
</dbReference>
<dbReference type="GO" id="GO:0042838">
    <property type="term" value="P:D-glucarate catabolic process"/>
    <property type="evidence" value="ECO:0007669"/>
    <property type="project" value="UniProtKB-UniRule"/>
</dbReference>
<dbReference type="CDD" id="cd00951">
    <property type="entry name" value="KDGDH"/>
    <property type="match status" value="1"/>
</dbReference>
<dbReference type="Gene3D" id="3.20.20.70">
    <property type="entry name" value="Aldolase class I"/>
    <property type="match status" value="1"/>
</dbReference>
<dbReference type="HAMAP" id="MF_00694">
    <property type="entry name" value="KDGDH"/>
    <property type="match status" value="1"/>
</dbReference>
<dbReference type="InterPro" id="IPR013785">
    <property type="entry name" value="Aldolase_TIM"/>
</dbReference>
<dbReference type="InterPro" id="IPR002220">
    <property type="entry name" value="DapA-like"/>
</dbReference>
<dbReference type="InterPro" id="IPR017655">
    <property type="entry name" value="Dehydro-deoxyglucarate_dehyd"/>
</dbReference>
<dbReference type="NCBIfam" id="TIGR03249">
    <property type="entry name" value="KdgD"/>
    <property type="match status" value="1"/>
</dbReference>
<dbReference type="NCBIfam" id="NF002958">
    <property type="entry name" value="PRK03620.1"/>
    <property type="match status" value="1"/>
</dbReference>
<dbReference type="PANTHER" id="PTHR12128:SF19">
    <property type="entry name" value="5-DEHYDRO-4-DEOXYGLUCARATE DEHYDRATASE 2-RELATED"/>
    <property type="match status" value="1"/>
</dbReference>
<dbReference type="PANTHER" id="PTHR12128">
    <property type="entry name" value="DIHYDRODIPICOLINATE SYNTHASE"/>
    <property type="match status" value="1"/>
</dbReference>
<dbReference type="Pfam" id="PF00701">
    <property type="entry name" value="DHDPS"/>
    <property type="match status" value="1"/>
</dbReference>
<dbReference type="PIRSF" id="PIRSF001365">
    <property type="entry name" value="DHDPS"/>
    <property type="match status" value="1"/>
</dbReference>
<dbReference type="SMART" id="SM01130">
    <property type="entry name" value="DHDPS"/>
    <property type="match status" value="1"/>
</dbReference>
<dbReference type="SUPFAM" id="SSF51569">
    <property type="entry name" value="Aldolase"/>
    <property type="match status" value="1"/>
</dbReference>